<accession>Q7YNG3</accession>
<feature type="chain" id="PRO_0000217905" description="Photosystem II reaction center protein T">
    <location>
        <begin position="1"/>
        <end position="35"/>
    </location>
</feature>
<feature type="transmembrane region" description="Helical" evidence="1">
    <location>
        <begin position="3"/>
        <end position="23"/>
    </location>
</feature>
<evidence type="ECO:0000255" key="1">
    <source>
        <dbReference type="HAMAP-Rule" id="MF_00808"/>
    </source>
</evidence>
<comment type="function">
    <text evidence="1">Found at the monomer-monomer interface of the photosystem II (PS II) dimer, plays a role in assembly and dimerization of PSII. PSII is a light-driven water plastoquinone oxidoreductase, using light energy to abstract electrons from H(2)O, generating a proton gradient subsequently used for ATP formation.</text>
</comment>
<comment type="subunit">
    <text evidence="1">PSII is composed of 1 copy each of membrane proteins PsbA, PsbB, PsbC, PsbD, PsbE, PsbF, PsbH, PsbI, PsbJ, PsbK, PsbL, PsbM, PsbT, PsbY, PsbZ, Psb30/Ycf12, at least 3 peripheral proteins of the oxygen-evolving complex and a large number of cofactors. It forms dimeric complexes.</text>
</comment>
<comment type="subcellular location">
    <subcellularLocation>
        <location evidence="1">Plastid</location>
        <location evidence="1">Chloroplast thylakoid membrane</location>
        <topology evidence="1">Single-pass membrane protein</topology>
    </subcellularLocation>
</comment>
<comment type="similarity">
    <text evidence="1">Belongs to the PsbT family.</text>
</comment>
<geneLocation type="chloroplast"/>
<protein>
    <recommendedName>
        <fullName evidence="1">Photosystem II reaction center protein T</fullName>
        <shortName evidence="1">PSII-T</shortName>
    </recommendedName>
</protein>
<keyword id="KW-0150">Chloroplast</keyword>
<keyword id="KW-0472">Membrane</keyword>
<keyword id="KW-0602">Photosynthesis</keyword>
<keyword id="KW-0604">Photosystem II</keyword>
<keyword id="KW-0934">Plastid</keyword>
<keyword id="KW-0793">Thylakoid</keyword>
<keyword id="KW-0812">Transmembrane</keyword>
<keyword id="KW-1133">Transmembrane helix</keyword>
<organism>
    <name type="scientific">Bassia hyssopifolia</name>
    <name type="common">Fivehorn smotherweed</name>
    <name type="synonym">Salsola hyssopifolia</name>
    <dbReference type="NCBI Taxonomy" id="224140"/>
    <lineage>
        <taxon>Eukaryota</taxon>
        <taxon>Viridiplantae</taxon>
        <taxon>Streptophyta</taxon>
        <taxon>Embryophyta</taxon>
        <taxon>Tracheophyta</taxon>
        <taxon>Spermatophyta</taxon>
        <taxon>Magnoliopsida</taxon>
        <taxon>eudicotyledons</taxon>
        <taxon>Gunneridae</taxon>
        <taxon>Pentapetalae</taxon>
        <taxon>Caryophyllales</taxon>
        <taxon>Chenopodiaceae</taxon>
        <taxon>Camphorosmoideae</taxon>
        <taxon>Camphorosmeae</taxon>
        <taxon>Bassia</taxon>
    </lineage>
</organism>
<name>PSBT_BASHY</name>
<gene>
    <name evidence="1" type="primary">psbT</name>
</gene>
<dbReference type="EMBL" id="AY181944">
    <property type="protein sequence ID" value="AAO66190.1"/>
    <property type="molecule type" value="Genomic_DNA"/>
</dbReference>
<dbReference type="SMR" id="Q7YNG3"/>
<dbReference type="GO" id="GO:0009535">
    <property type="term" value="C:chloroplast thylakoid membrane"/>
    <property type="evidence" value="ECO:0007669"/>
    <property type="project" value="UniProtKB-SubCell"/>
</dbReference>
<dbReference type="GO" id="GO:0009539">
    <property type="term" value="C:photosystem II reaction center"/>
    <property type="evidence" value="ECO:0007669"/>
    <property type="project" value="InterPro"/>
</dbReference>
<dbReference type="GO" id="GO:0015979">
    <property type="term" value="P:photosynthesis"/>
    <property type="evidence" value="ECO:0007669"/>
    <property type="project" value="UniProtKB-UniRule"/>
</dbReference>
<dbReference type="HAMAP" id="MF_00808">
    <property type="entry name" value="PSII_PsbT"/>
    <property type="match status" value="1"/>
</dbReference>
<dbReference type="InterPro" id="IPR001743">
    <property type="entry name" value="PSII_PsbT"/>
</dbReference>
<dbReference type="InterPro" id="IPR037268">
    <property type="entry name" value="PSII_PsbT_sf"/>
</dbReference>
<dbReference type="PANTHER" id="PTHR36411">
    <property type="match status" value="1"/>
</dbReference>
<dbReference type="PANTHER" id="PTHR36411:SF2">
    <property type="entry name" value="PHOTOSYSTEM II REACTION CENTER PROTEIN T"/>
    <property type="match status" value="1"/>
</dbReference>
<dbReference type="Pfam" id="PF01405">
    <property type="entry name" value="PsbT"/>
    <property type="match status" value="1"/>
</dbReference>
<dbReference type="SUPFAM" id="SSF161029">
    <property type="entry name" value="Photosystem II reaction center protein T, PsbT"/>
    <property type="match status" value="1"/>
</dbReference>
<proteinExistence type="inferred from homology"/>
<reference key="1">
    <citation type="journal article" date="2003" name="Plant Syst. Evol.">
        <title>An integrated molecular and morphological study of the subfamily Suaedoideae Ulbr. (Chenopodiaceae).</title>
        <authorList>
            <person name="Schuetze P."/>
            <person name="Freitag H."/>
            <person name="Weising K."/>
        </authorList>
    </citation>
    <scope>NUCLEOTIDE SEQUENCE [GENOMIC DNA]</scope>
</reference>
<sequence length="35" mass="4104">MEALVYTFLLVSTLGIIFFAIFFREPPKIQTKKIK</sequence>